<protein>
    <recommendedName>
        <fullName evidence="1">Orotidine 5'-phosphate decarboxylase</fullName>
        <ecNumber evidence="1">4.1.1.23</ecNumber>
    </recommendedName>
    <alternativeName>
        <fullName evidence="1">OMP decarboxylase</fullName>
        <shortName evidence="1">OMPDCase</shortName>
        <shortName evidence="1">OMPdecase</shortName>
    </alternativeName>
</protein>
<accession>A6QGA5</accession>
<keyword id="KW-0210">Decarboxylase</keyword>
<keyword id="KW-0456">Lyase</keyword>
<keyword id="KW-0665">Pyrimidine biosynthesis</keyword>
<feature type="chain" id="PRO_1000073090" description="Orotidine 5'-phosphate decarboxylase">
    <location>
        <begin position="1"/>
        <end position="230"/>
    </location>
</feature>
<feature type="active site" description="Proton donor" evidence="1">
    <location>
        <position position="60"/>
    </location>
</feature>
<feature type="binding site" evidence="1">
    <location>
        <position position="10"/>
    </location>
    <ligand>
        <name>substrate</name>
    </ligand>
</feature>
<feature type="binding site" evidence="1">
    <location>
        <position position="31"/>
    </location>
    <ligand>
        <name>substrate</name>
    </ligand>
</feature>
<feature type="binding site" evidence="1">
    <location>
        <begin position="58"/>
        <end position="67"/>
    </location>
    <ligand>
        <name>substrate</name>
    </ligand>
</feature>
<feature type="binding site" evidence="1">
    <location>
        <position position="117"/>
    </location>
    <ligand>
        <name>substrate</name>
    </ligand>
</feature>
<feature type="binding site" evidence="1">
    <location>
        <position position="179"/>
    </location>
    <ligand>
        <name>substrate</name>
    </ligand>
</feature>
<feature type="binding site" evidence="1">
    <location>
        <position position="188"/>
    </location>
    <ligand>
        <name>substrate</name>
    </ligand>
</feature>
<feature type="binding site" evidence="1">
    <location>
        <position position="208"/>
    </location>
    <ligand>
        <name>substrate</name>
    </ligand>
</feature>
<feature type="binding site" evidence="1">
    <location>
        <position position="209"/>
    </location>
    <ligand>
        <name>substrate</name>
    </ligand>
</feature>
<dbReference type="EC" id="4.1.1.23" evidence="1"/>
<dbReference type="EMBL" id="AP009351">
    <property type="protein sequence ID" value="BAF67387.1"/>
    <property type="molecule type" value="Genomic_DNA"/>
</dbReference>
<dbReference type="RefSeq" id="WP_000654061.1">
    <property type="nucleotide sequence ID" value="NZ_JBBIAE010000001.1"/>
</dbReference>
<dbReference type="SMR" id="A6QGA5"/>
<dbReference type="KEGG" id="sae:NWMN_1115"/>
<dbReference type="HOGENOM" id="CLU_067069_1_1_9"/>
<dbReference type="UniPathway" id="UPA00070">
    <property type="reaction ID" value="UER00120"/>
</dbReference>
<dbReference type="Proteomes" id="UP000006386">
    <property type="component" value="Chromosome"/>
</dbReference>
<dbReference type="GO" id="GO:0005829">
    <property type="term" value="C:cytosol"/>
    <property type="evidence" value="ECO:0007669"/>
    <property type="project" value="TreeGrafter"/>
</dbReference>
<dbReference type="GO" id="GO:0004590">
    <property type="term" value="F:orotidine-5'-phosphate decarboxylase activity"/>
    <property type="evidence" value="ECO:0007669"/>
    <property type="project" value="UniProtKB-UniRule"/>
</dbReference>
<dbReference type="GO" id="GO:0006207">
    <property type="term" value="P:'de novo' pyrimidine nucleobase biosynthetic process"/>
    <property type="evidence" value="ECO:0007669"/>
    <property type="project" value="InterPro"/>
</dbReference>
<dbReference type="GO" id="GO:0044205">
    <property type="term" value="P:'de novo' UMP biosynthetic process"/>
    <property type="evidence" value="ECO:0007669"/>
    <property type="project" value="UniProtKB-UniRule"/>
</dbReference>
<dbReference type="CDD" id="cd04725">
    <property type="entry name" value="OMP_decarboxylase_like"/>
    <property type="match status" value="1"/>
</dbReference>
<dbReference type="FunFam" id="3.20.20.70:FF:000015">
    <property type="entry name" value="Orotidine 5'-phosphate decarboxylase"/>
    <property type="match status" value="1"/>
</dbReference>
<dbReference type="Gene3D" id="3.20.20.70">
    <property type="entry name" value="Aldolase class I"/>
    <property type="match status" value="1"/>
</dbReference>
<dbReference type="HAMAP" id="MF_01200_B">
    <property type="entry name" value="OMPdecase_type1_B"/>
    <property type="match status" value="1"/>
</dbReference>
<dbReference type="InterPro" id="IPR013785">
    <property type="entry name" value="Aldolase_TIM"/>
</dbReference>
<dbReference type="InterPro" id="IPR014732">
    <property type="entry name" value="OMPdecase"/>
</dbReference>
<dbReference type="InterPro" id="IPR018089">
    <property type="entry name" value="OMPdecase_AS"/>
</dbReference>
<dbReference type="InterPro" id="IPR047596">
    <property type="entry name" value="OMPdecase_bac"/>
</dbReference>
<dbReference type="InterPro" id="IPR001754">
    <property type="entry name" value="OMPdeCOase_dom"/>
</dbReference>
<dbReference type="InterPro" id="IPR011060">
    <property type="entry name" value="RibuloseP-bd_barrel"/>
</dbReference>
<dbReference type="NCBIfam" id="NF001273">
    <property type="entry name" value="PRK00230.1"/>
    <property type="match status" value="1"/>
</dbReference>
<dbReference type="NCBIfam" id="TIGR01740">
    <property type="entry name" value="pyrF"/>
    <property type="match status" value="1"/>
</dbReference>
<dbReference type="PANTHER" id="PTHR32119">
    <property type="entry name" value="OROTIDINE 5'-PHOSPHATE DECARBOXYLASE"/>
    <property type="match status" value="1"/>
</dbReference>
<dbReference type="PANTHER" id="PTHR32119:SF2">
    <property type="entry name" value="OROTIDINE 5'-PHOSPHATE DECARBOXYLASE"/>
    <property type="match status" value="1"/>
</dbReference>
<dbReference type="Pfam" id="PF00215">
    <property type="entry name" value="OMPdecase"/>
    <property type="match status" value="1"/>
</dbReference>
<dbReference type="SMART" id="SM00934">
    <property type="entry name" value="OMPdecase"/>
    <property type="match status" value="1"/>
</dbReference>
<dbReference type="SUPFAM" id="SSF51366">
    <property type="entry name" value="Ribulose-phoshate binding barrel"/>
    <property type="match status" value="1"/>
</dbReference>
<dbReference type="PROSITE" id="PS00156">
    <property type="entry name" value="OMPDECASE"/>
    <property type="match status" value="1"/>
</dbReference>
<gene>
    <name evidence="1" type="primary">pyrF</name>
    <name type="ordered locus">NWMN_1115</name>
</gene>
<reference key="1">
    <citation type="journal article" date="2008" name="J. Bacteriol.">
        <title>Genome sequence of Staphylococcus aureus strain Newman and comparative analysis of staphylococcal genomes: polymorphism and evolution of two major pathogenicity islands.</title>
        <authorList>
            <person name="Baba T."/>
            <person name="Bae T."/>
            <person name="Schneewind O."/>
            <person name="Takeuchi F."/>
            <person name="Hiramatsu K."/>
        </authorList>
    </citation>
    <scope>NUCLEOTIDE SEQUENCE [LARGE SCALE GENOMIC DNA]</scope>
    <source>
        <strain>Newman</strain>
    </source>
</reference>
<organism>
    <name type="scientific">Staphylococcus aureus (strain Newman)</name>
    <dbReference type="NCBI Taxonomy" id="426430"/>
    <lineage>
        <taxon>Bacteria</taxon>
        <taxon>Bacillati</taxon>
        <taxon>Bacillota</taxon>
        <taxon>Bacilli</taxon>
        <taxon>Bacillales</taxon>
        <taxon>Staphylococcaceae</taxon>
        <taxon>Staphylococcus</taxon>
    </lineage>
</organism>
<name>PYRF_STAAE</name>
<proteinExistence type="inferred from homology"/>
<comment type="function">
    <text evidence="1">Catalyzes the decarboxylation of orotidine 5'-monophosphate (OMP) to uridine 5'-monophosphate (UMP).</text>
</comment>
<comment type="catalytic activity">
    <reaction evidence="1">
        <text>orotidine 5'-phosphate + H(+) = UMP + CO2</text>
        <dbReference type="Rhea" id="RHEA:11596"/>
        <dbReference type="ChEBI" id="CHEBI:15378"/>
        <dbReference type="ChEBI" id="CHEBI:16526"/>
        <dbReference type="ChEBI" id="CHEBI:57538"/>
        <dbReference type="ChEBI" id="CHEBI:57865"/>
        <dbReference type="EC" id="4.1.1.23"/>
    </reaction>
</comment>
<comment type="pathway">
    <text evidence="1">Pyrimidine metabolism; UMP biosynthesis via de novo pathway; UMP from orotate: step 2/2.</text>
</comment>
<comment type="subunit">
    <text evidence="1">Homodimer.</text>
</comment>
<comment type="similarity">
    <text evidence="1">Belongs to the OMP decarboxylase family. Type 1 subfamily.</text>
</comment>
<sequence length="230" mass="25596">MKDLPIIALDFESKEKVNQFLDLFDESLFVKVGMELFYQEGPQLINEIKERGHDVFLDLKLHDIPNTVGKAMEGLAKLNVDLVNVHAAGGVKMMSEAIKGLRKHNQDTKIIAVTQLTSTTEDMLRHEQNIQTSIEEAVLNYAKLANAAGLDGVVCSPLESRMLTEKLGTSFLKVTPGIRPKGASQNDQHRITTPEEARQLGSTHIVVGRPITQSDNPVESYHKIKESWLV</sequence>
<evidence type="ECO:0000255" key="1">
    <source>
        <dbReference type="HAMAP-Rule" id="MF_01200"/>
    </source>
</evidence>